<sequence length="300" mass="33333">MIRQRTLKNSIRATGVGLHTGEKVYLTLRPAPANAGIIFRRTDLDREIKATAAAVGDTRLSTCLVEDGVRVSTVEHLLSALAGLGIDNCYVDLSAAEVPIMDGSAAPFVFLVRSAGIKEQEAPKRFVRILEPVQVVDGDKWVAFEPFEGFKVSFTIDFDHPVFLDQHARAEVDFSSTSFIKEVSRARTFGFMKEIEALRASRLALGGSLDNAIVVDDYRVLNEDGLRYRDEFVKHKILDAIGDLYLLGSSLIGSFHGHKSGHALNNRLLRKLLEHEHAWEEVTFEELDELPIAYDQPVVA</sequence>
<proteinExistence type="inferred from homology"/>
<organism>
    <name type="scientific">Halorhodospira halophila (strain DSM 244 / SL1)</name>
    <name type="common">Ectothiorhodospira halophila (strain DSM 244 / SL1)</name>
    <dbReference type="NCBI Taxonomy" id="349124"/>
    <lineage>
        <taxon>Bacteria</taxon>
        <taxon>Pseudomonadati</taxon>
        <taxon>Pseudomonadota</taxon>
        <taxon>Gammaproteobacteria</taxon>
        <taxon>Chromatiales</taxon>
        <taxon>Ectothiorhodospiraceae</taxon>
        <taxon>Halorhodospira</taxon>
    </lineage>
</organism>
<feature type="chain" id="PRO_1000013210" description="UDP-3-O-acyl-N-acetylglucosamine deacetylase">
    <location>
        <begin position="1"/>
        <end position="300"/>
    </location>
</feature>
<feature type="active site" description="Proton donor" evidence="1">
    <location>
        <position position="262"/>
    </location>
</feature>
<feature type="binding site" evidence="1">
    <location>
        <position position="76"/>
    </location>
    <ligand>
        <name>Zn(2+)</name>
        <dbReference type="ChEBI" id="CHEBI:29105"/>
    </ligand>
</feature>
<feature type="binding site" evidence="1">
    <location>
        <position position="235"/>
    </location>
    <ligand>
        <name>Zn(2+)</name>
        <dbReference type="ChEBI" id="CHEBI:29105"/>
    </ligand>
</feature>
<feature type="binding site" evidence="1">
    <location>
        <position position="239"/>
    </location>
    <ligand>
        <name>Zn(2+)</name>
        <dbReference type="ChEBI" id="CHEBI:29105"/>
    </ligand>
</feature>
<reference key="1">
    <citation type="submission" date="2006-12" db="EMBL/GenBank/DDBJ databases">
        <title>Complete sequence of Halorhodospira halophila SL1.</title>
        <authorList>
            <consortium name="US DOE Joint Genome Institute"/>
            <person name="Copeland A."/>
            <person name="Lucas S."/>
            <person name="Lapidus A."/>
            <person name="Barry K."/>
            <person name="Detter J.C."/>
            <person name="Glavina del Rio T."/>
            <person name="Hammon N."/>
            <person name="Israni S."/>
            <person name="Dalin E."/>
            <person name="Tice H."/>
            <person name="Pitluck S."/>
            <person name="Saunders E."/>
            <person name="Brettin T."/>
            <person name="Bruce D."/>
            <person name="Han C."/>
            <person name="Tapia R."/>
            <person name="Schmutz J."/>
            <person name="Larimer F."/>
            <person name="Land M."/>
            <person name="Hauser L."/>
            <person name="Kyrpides N."/>
            <person name="Mikhailova N."/>
            <person name="Hoff W."/>
            <person name="Richardson P."/>
        </authorList>
    </citation>
    <scope>NUCLEOTIDE SEQUENCE [LARGE SCALE GENOMIC DNA]</scope>
    <source>
        <strain>DSM 244 / SL1</strain>
    </source>
</reference>
<evidence type="ECO:0000255" key="1">
    <source>
        <dbReference type="HAMAP-Rule" id="MF_00388"/>
    </source>
</evidence>
<comment type="function">
    <text evidence="1">Catalyzes the hydrolysis of UDP-3-O-myristoyl-N-acetylglucosamine to form UDP-3-O-myristoylglucosamine and acetate, the committed step in lipid A biosynthesis.</text>
</comment>
<comment type="catalytic activity">
    <reaction evidence="1">
        <text>a UDP-3-O-[(3R)-3-hydroxyacyl]-N-acetyl-alpha-D-glucosamine + H2O = a UDP-3-O-[(3R)-3-hydroxyacyl]-alpha-D-glucosamine + acetate</text>
        <dbReference type="Rhea" id="RHEA:67816"/>
        <dbReference type="ChEBI" id="CHEBI:15377"/>
        <dbReference type="ChEBI" id="CHEBI:30089"/>
        <dbReference type="ChEBI" id="CHEBI:137740"/>
        <dbReference type="ChEBI" id="CHEBI:173225"/>
        <dbReference type="EC" id="3.5.1.108"/>
    </reaction>
</comment>
<comment type="cofactor">
    <cofactor evidence="1">
        <name>Zn(2+)</name>
        <dbReference type="ChEBI" id="CHEBI:29105"/>
    </cofactor>
</comment>
<comment type="pathway">
    <text evidence="1">Glycolipid biosynthesis; lipid IV(A) biosynthesis; lipid IV(A) from (3R)-3-hydroxytetradecanoyl-[acyl-carrier-protein] and UDP-N-acetyl-alpha-D-glucosamine: step 2/6.</text>
</comment>
<comment type="similarity">
    <text evidence="1">Belongs to the LpxC family.</text>
</comment>
<gene>
    <name evidence="1" type="primary">lpxC</name>
    <name type="ordered locus">Hhal_2084</name>
</gene>
<accession>A1WYT6</accession>
<dbReference type="EC" id="3.5.1.108" evidence="1"/>
<dbReference type="EMBL" id="CP000544">
    <property type="protein sequence ID" value="ABM62848.1"/>
    <property type="molecule type" value="Genomic_DNA"/>
</dbReference>
<dbReference type="RefSeq" id="WP_011814870.1">
    <property type="nucleotide sequence ID" value="NC_008789.1"/>
</dbReference>
<dbReference type="SMR" id="A1WYT6"/>
<dbReference type="STRING" id="349124.Hhal_2084"/>
<dbReference type="KEGG" id="hha:Hhal_2084"/>
<dbReference type="eggNOG" id="COG0774">
    <property type="taxonomic scope" value="Bacteria"/>
</dbReference>
<dbReference type="HOGENOM" id="CLU_046528_1_0_6"/>
<dbReference type="OrthoDB" id="9802746at2"/>
<dbReference type="UniPathway" id="UPA00359">
    <property type="reaction ID" value="UER00478"/>
</dbReference>
<dbReference type="Proteomes" id="UP000000647">
    <property type="component" value="Chromosome"/>
</dbReference>
<dbReference type="GO" id="GO:0016020">
    <property type="term" value="C:membrane"/>
    <property type="evidence" value="ECO:0007669"/>
    <property type="project" value="GOC"/>
</dbReference>
<dbReference type="GO" id="GO:0046872">
    <property type="term" value="F:metal ion binding"/>
    <property type="evidence" value="ECO:0007669"/>
    <property type="project" value="UniProtKB-KW"/>
</dbReference>
<dbReference type="GO" id="GO:0103117">
    <property type="term" value="F:UDP-3-O-acyl-N-acetylglucosamine deacetylase activity"/>
    <property type="evidence" value="ECO:0007669"/>
    <property type="project" value="UniProtKB-UniRule"/>
</dbReference>
<dbReference type="GO" id="GO:0009245">
    <property type="term" value="P:lipid A biosynthetic process"/>
    <property type="evidence" value="ECO:0007669"/>
    <property type="project" value="UniProtKB-UniRule"/>
</dbReference>
<dbReference type="Gene3D" id="3.30.230.20">
    <property type="entry name" value="lpxc deacetylase, domain 1"/>
    <property type="match status" value="1"/>
</dbReference>
<dbReference type="Gene3D" id="3.30.1700.10">
    <property type="entry name" value="lpxc deacetylase, domain 2"/>
    <property type="match status" value="1"/>
</dbReference>
<dbReference type="HAMAP" id="MF_00388">
    <property type="entry name" value="LpxC"/>
    <property type="match status" value="1"/>
</dbReference>
<dbReference type="InterPro" id="IPR020568">
    <property type="entry name" value="Ribosomal_Su5_D2-typ_SF"/>
</dbReference>
<dbReference type="InterPro" id="IPR004463">
    <property type="entry name" value="UDP-acyl_GlcNac_deAcase"/>
</dbReference>
<dbReference type="InterPro" id="IPR011334">
    <property type="entry name" value="UDP-acyl_GlcNac_deAcase_C"/>
</dbReference>
<dbReference type="InterPro" id="IPR015870">
    <property type="entry name" value="UDP-acyl_N-AcGlcN_deAcase_N"/>
</dbReference>
<dbReference type="NCBIfam" id="TIGR00325">
    <property type="entry name" value="lpxC"/>
    <property type="match status" value="1"/>
</dbReference>
<dbReference type="PANTHER" id="PTHR33694">
    <property type="entry name" value="UDP-3-O-ACYL-N-ACETYLGLUCOSAMINE DEACETYLASE 1, MITOCHONDRIAL-RELATED"/>
    <property type="match status" value="1"/>
</dbReference>
<dbReference type="PANTHER" id="PTHR33694:SF1">
    <property type="entry name" value="UDP-3-O-ACYL-N-ACETYLGLUCOSAMINE DEACETYLASE 1, MITOCHONDRIAL-RELATED"/>
    <property type="match status" value="1"/>
</dbReference>
<dbReference type="Pfam" id="PF03331">
    <property type="entry name" value="LpxC"/>
    <property type="match status" value="1"/>
</dbReference>
<dbReference type="SUPFAM" id="SSF54211">
    <property type="entry name" value="Ribosomal protein S5 domain 2-like"/>
    <property type="match status" value="2"/>
</dbReference>
<keyword id="KW-0378">Hydrolase</keyword>
<keyword id="KW-0441">Lipid A biosynthesis</keyword>
<keyword id="KW-0444">Lipid biosynthesis</keyword>
<keyword id="KW-0443">Lipid metabolism</keyword>
<keyword id="KW-0479">Metal-binding</keyword>
<keyword id="KW-1185">Reference proteome</keyword>
<keyword id="KW-0862">Zinc</keyword>
<name>LPXC_HALHL</name>
<protein>
    <recommendedName>
        <fullName evidence="1">UDP-3-O-acyl-N-acetylglucosamine deacetylase</fullName>
        <shortName evidence="1">UDP-3-O-acyl-GlcNAc deacetylase</shortName>
        <ecNumber evidence="1">3.5.1.108</ecNumber>
    </recommendedName>
    <alternativeName>
        <fullName evidence="1">UDP-3-O-[R-3-hydroxymyristoyl]-N-acetylglucosamine deacetylase</fullName>
    </alternativeName>
</protein>